<feature type="chain" id="PRO_1000185771" description="Spermidine export protein MdtI">
    <location>
        <begin position="1"/>
        <end position="109"/>
    </location>
</feature>
<feature type="transmembrane region" description="Helical" evidence="1">
    <location>
        <begin position="6"/>
        <end position="26"/>
    </location>
</feature>
<feature type="transmembrane region" description="Helical" evidence="1">
    <location>
        <begin position="36"/>
        <end position="56"/>
    </location>
</feature>
<feature type="transmembrane region" description="Helical" evidence="1">
    <location>
        <begin position="64"/>
        <end position="84"/>
    </location>
</feature>
<feature type="transmembrane region" description="Helical" evidence="1">
    <location>
        <begin position="88"/>
        <end position="108"/>
    </location>
</feature>
<keyword id="KW-0997">Cell inner membrane</keyword>
<keyword id="KW-1003">Cell membrane</keyword>
<keyword id="KW-0472">Membrane</keyword>
<keyword id="KW-0812">Transmembrane</keyword>
<keyword id="KW-1133">Transmembrane helix</keyword>
<keyword id="KW-0813">Transport</keyword>
<reference key="1">
    <citation type="journal article" date="2009" name="PLoS ONE">
        <title>Salmonella paratyphi C: genetic divergence from Salmonella choleraesuis and pathogenic convergence with Salmonella typhi.</title>
        <authorList>
            <person name="Liu W.-Q."/>
            <person name="Feng Y."/>
            <person name="Wang Y."/>
            <person name="Zou Q.-H."/>
            <person name="Chen F."/>
            <person name="Guo J.-T."/>
            <person name="Peng Y.-H."/>
            <person name="Jin Y."/>
            <person name="Li Y.-G."/>
            <person name="Hu S.-N."/>
            <person name="Johnston R.N."/>
            <person name="Liu G.-R."/>
            <person name="Liu S.-L."/>
        </authorList>
    </citation>
    <scope>NUCLEOTIDE SEQUENCE [LARGE SCALE GENOMIC DNA]</scope>
    <source>
        <strain>RKS4594</strain>
    </source>
</reference>
<accession>C0Q4Y4</accession>
<dbReference type="EMBL" id="CP000857">
    <property type="protein sequence ID" value="ACN46367.1"/>
    <property type="molecule type" value="Genomic_DNA"/>
</dbReference>
<dbReference type="RefSeq" id="WP_001183821.1">
    <property type="nucleotide sequence ID" value="NC_012125.1"/>
</dbReference>
<dbReference type="SMR" id="C0Q4Y4"/>
<dbReference type="KEGG" id="sei:SPC_2247"/>
<dbReference type="HOGENOM" id="CLU_133067_0_4_6"/>
<dbReference type="Proteomes" id="UP000001599">
    <property type="component" value="Chromosome"/>
</dbReference>
<dbReference type="GO" id="GO:0005886">
    <property type="term" value="C:plasma membrane"/>
    <property type="evidence" value="ECO:0007669"/>
    <property type="project" value="UniProtKB-SubCell"/>
</dbReference>
<dbReference type="GO" id="GO:0015199">
    <property type="term" value="F:amino-acid betaine transmembrane transporter activity"/>
    <property type="evidence" value="ECO:0007669"/>
    <property type="project" value="TreeGrafter"/>
</dbReference>
<dbReference type="GO" id="GO:0015297">
    <property type="term" value="F:antiporter activity"/>
    <property type="evidence" value="ECO:0007669"/>
    <property type="project" value="TreeGrafter"/>
</dbReference>
<dbReference type="GO" id="GO:0015220">
    <property type="term" value="F:choline transmembrane transporter activity"/>
    <property type="evidence" value="ECO:0007669"/>
    <property type="project" value="TreeGrafter"/>
</dbReference>
<dbReference type="GO" id="GO:0015606">
    <property type="term" value="F:spermidine transmembrane transporter activity"/>
    <property type="evidence" value="ECO:0007669"/>
    <property type="project" value="UniProtKB-UniRule"/>
</dbReference>
<dbReference type="GO" id="GO:0031460">
    <property type="term" value="P:glycine betaine transport"/>
    <property type="evidence" value="ECO:0007669"/>
    <property type="project" value="TreeGrafter"/>
</dbReference>
<dbReference type="FunFam" id="1.10.3730.20:FF:000001">
    <property type="entry name" value="Quaternary ammonium compound resistance transporter SugE"/>
    <property type="match status" value="1"/>
</dbReference>
<dbReference type="Gene3D" id="1.10.3730.20">
    <property type="match status" value="1"/>
</dbReference>
<dbReference type="HAMAP" id="MF_01597">
    <property type="entry name" value="MdtI"/>
    <property type="match status" value="1"/>
</dbReference>
<dbReference type="InterPro" id="IPR000390">
    <property type="entry name" value="Small_drug/metabolite_transptr"/>
</dbReference>
<dbReference type="InterPro" id="IPR045324">
    <property type="entry name" value="Small_multidrug_res"/>
</dbReference>
<dbReference type="InterPro" id="IPR023737">
    <property type="entry name" value="Spermidine_export_MdtI"/>
</dbReference>
<dbReference type="NCBIfam" id="NF007934">
    <property type="entry name" value="PRK10650.1"/>
    <property type="match status" value="1"/>
</dbReference>
<dbReference type="PANTHER" id="PTHR30561">
    <property type="entry name" value="SMR FAMILY PROTON-DEPENDENT DRUG EFFLUX TRANSPORTER SUGE"/>
    <property type="match status" value="1"/>
</dbReference>
<dbReference type="PANTHER" id="PTHR30561:SF6">
    <property type="entry name" value="SPERMIDINE EXPORT PROTEIN MDTI"/>
    <property type="match status" value="1"/>
</dbReference>
<dbReference type="Pfam" id="PF00893">
    <property type="entry name" value="Multi_Drug_Res"/>
    <property type="match status" value="1"/>
</dbReference>
<dbReference type="SUPFAM" id="SSF103481">
    <property type="entry name" value="Multidrug resistance efflux transporter EmrE"/>
    <property type="match status" value="1"/>
</dbReference>
<sequence>MQQFEWIHGAWLGLAIMLEIAANVLLKFSDGFRRKCYGILSLAAVLAAFSALSQAVKGIDLSVAYALWGGFGIAATLAAGWVLFGQRLNPKGWVGVILLLAGMVMIKFA</sequence>
<organism>
    <name type="scientific">Salmonella paratyphi C (strain RKS4594)</name>
    <dbReference type="NCBI Taxonomy" id="476213"/>
    <lineage>
        <taxon>Bacteria</taxon>
        <taxon>Pseudomonadati</taxon>
        <taxon>Pseudomonadota</taxon>
        <taxon>Gammaproteobacteria</taxon>
        <taxon>Enterobacterales</taxon>
        <taxon>Enterobacteriaceae</taxon>
        <taxon>Salmonella</taxon>
    </lineage>
</organism>
<gene>
    <name evidence="1" type="primary">mdtI</name>
    <name type="ordered locus">SPC_2247</name>
</gene>
<name>MDTI_SALPC</name>
<evidence type="ECO:0000255" key="1">
    <source>
        <dbReference type="HAMAP-Rule" id="MF_01597"/>
    </source>
</evidence>
<comment type="function">
    <text evidence="1">Catalyzes the excretion of spermidine.</text>
</comment>
<comment type="subunit">
    <text evidence="1">Forms a complex with MdtJ.</text>
</comment>
<comment type="subcellular location">
    <subcellularLocation>
        <location evidence="1">Cell inner membrane</location>
        <topology evidence="1">Multi-pass membrane protein</topology>
    </subcellularLocation>
</comment>
<comment type="similarity">
    <text evidence="1">Belongs to the drug/metabolite transporter (DMT) superfamily. Small multidrug resistance (SMR) (TC 2.A.7.1) family. MdtI subfamily.</text>
</comment>
<proteinExistence type="inferred from homology"/>
<protein>
    <recommendedName>
        <fullName evidence="1">Spermidine export protein MdtI</fullName>
    </recommendedName>
</protein>